<keyword id="KW-0997">Cell inner membrane</keyword>
<keyword id="KW-1003">Cell membrane</keyword>
<keyword id="KW-0472">Membrane</keyword>
<keyword id="KW-1185">Reference proteome</keyword>
<dbReference type="EMBL" id="CP000880">
    <property type="protein sequence ID" value="ABX24460.1"/>
    <property type="molecule type" value="Genomic_DNA"/>
</dbReference>
<dbReference type="SMR" id="A9MSB6"/>
<dbReference type="STRING" id="41514.SARI_04696"/>
<dbReference type="KEGG" id="ses:SARI_04696"/>
<dbReference type="HOGENOM" id="CLU_121866_0_0_6"/>
<dbReference type="Proteomes" id="UP000002084">
    <property type="component" value="Chromosome"/>
</dbReference>
<dbReference type="GO" id="GO:0009898">
    <property type="term" value="C:cytoplasmic side of plasma membrane"/>
    <property type="evidence" value="ECO:0007669"/>
    <property type="project" value="InterPro"/>
</dbReference>
<dbReference type="CDD" id="cd16323">
    <property type="entry name" value="Syd"/>
    <property type="match status" value="1"/>
</dbReference>
<dbReference type="Gene3D" id="3.40.1580.20">
    <property type="entry name" value="Syd protein"/>
    <property type="match status" value="1"/>
</dbReference>
<dbReference type="HAMAP" id="MF_01104">
    <property type="entry name" value="Syd"/>
    <property type="match status" value="1"/>
</dbReference>
<dbReference type="InterPro" id="IPR009948">
    <property type="entry name" value="Syd"/>
</dbReference>
<dbReference type="InterPro" id="IPR038228">
    <property type="entry name" value="Syd_sf"/>
</dbReference>
<dbReference type="NCBIfam" id="NF003439">
    <property type="entry name" value="PRK04968.1"/>
    <property type="match status" value="1"/>
</dbReference>
<dbReference type="Pfam" id="PF07348">
    <property type="entry name" value="Syd"/>
    <property type="match status" value="1"/>
</dbReference>
<gene>
    <name evidence="1" type="primary">syd</name>
    <name type="ordered locus">SARI_04696</name>
</gene>
<reference key="1">
    <citation type="submission" date="2007-11" db="EMBL/GenBank/DDBJ databases">
        <authorList>
            <consortium name="The Salmonella enterica serovar Arizonae Genome Sequencing Project"/>
            <person name="McClelland M."/>
            <person name="Sanderson E.K."/>
            <person name="Porwollik S."/>
            <person name="Spieth J."/>
            <person name="Clifton W.S."/>
            <person name="Fulton R."/>
            <person name="Chunyan W."/>
            <person name="Wollam A."/>
            <person name="Shah N."/>
            <person name="Pepin K."/>
            <person name="Bhonagiri V."/>
            <person name="Nash W."/>
            <person name="Johnson M."/>
            <person name="Thiruvilangam P."/>
            <person name="Wilson R."/>
        </authorList>
    </citation>
    <scope>NUCLEOTIDE SEQUENCE [LARGE SCALE GENOMIC DNA]</scope>
    <source>
        <strain>ATCC BAA-731 / CDC346-86 / RSK2980</strain>
    </source>
</reference>
<comment type="function">
    <text evidence="1">Interacts with the SecY protein in vivo. May bind preferentially to an uncomplexed state of SecY, thus functioning either as a chelating agent for excess SecY in the cell or as a regulatory factor that negatively controls the translocase function.</text>
</comment>
<comment type="subcellular location">
    <subcellularLocation>
        <location evidence="1">Cell inner membrane</location>
        <topology evidence="1">Peripheral membrane protein</topology>
        <orientation evidence="1">Cytoplasmic side</orientation>
    </subcellularLocation>
    <text evidence="1">Loosely associated with the cytoplasmic side of the inner membrane, probably via SecY.</text>
</comment>
<comment type="similarity">
    <text evidence="1">Belongs to the Syd family.</text>
</comment>
<proteinExistence type="inferred from homology"/>
<protein>
    <recommendedName>
        <fullName evidence="1">Protein Syd</fullName>
    </recommendedName>
</protein>
<sequence>MDELTAQALKAFTRRYCGAWQEKHGSWPLSEELYGVPSPCIISSTRDAVYWQPQPFEGEENVNAVERAFDIVVQPALHAFYTTQFAGDMPAQFADEKLTLLQTWSQDDFRRVQENLIGHLVTQKRLRLSPTLFIATQENELEVISICNLSGEVIKETLGTRHRIVLAATLAEFLTQLNPLL</sequence>
<evidence type="ECO:0000255" key="1">
    <source>
        <dbReference type="HAMAP-Rule" id="MF_01104"/>
    </source>
</evidence>
<organism>
    <name type="scientific">Salmonella arizonae (strain ATCC BAA-731 / CDC346-86 / RSK2980)</name>
    <dbReference type="NCBI Taxonomy" id="41514"/>
    <lineage>
        <taxon>Bacteria</taxon>
        <taxon>Pseudomonadati</taxon>
        <taxon>Pseudomonadota</taxon>
        <taxon>Gammaproteobacteria</taxon>
        <taxon>Enterobacterales</taxon>
        <taxon>Enterobacteriaceae</taxon>
        <taxon>Salmonella</taxon>
    </lineage>
</organism>
<feature type="chain" id="PRO_1000084802" description="Protein Syd">
    <location>
        <begin position="1"/>
        <end position="181"/>
    </location>
</feature>
<name>SYDP_SALAR</name>
<accession>A9MSB6</accession>